<dbReference type="EMBL" id="AE004439">
    <property type="protein sequence ID" value="AAK03489.1"/>
    <property type="molecule type" value="Genomic_DNA"/>
</dbReference>
<dbReference type="RefSeq" id="WP_005548786.1">
    <property type="nucleotide sequence ID" value="NC_002663.1"/>
</dbReference>
<dbReference type="SMR" id="P66068"/>
<dbReference type="STRING" id="272843.PM1405"/>
<dbReference type="EnsemblBacteria" id="AAK03489">
    <property type="protein sequence ID" value="AAK03489"/>
    <property type="gene ID" value="PM1405"/>
</dbReference>
<dbReference type="GeneID" id="93226847"/>
<dbReference type="KEGG" id="pmu:PM1405"/>
<dbReference type="HOGENOM" id="CLU_095071_2_1_6"/>
<dbReference type="OrthoDB" id="9806379at2"/>
<dbReference type="Proteomes" id="UP000000809">
    <property type="component" value="Chromosome"/>
</dbReference>
<dbReference type="GO" id="GO:0022625">
    <property type="term" value="C:cytosolic large ribosomal subunit"/>
    <property type="evidence" value="ECO:0007669"/>
    <property type="project" value="TreeGrafter"/>
</dbReference>
<dbReference type="GO" id="GO:0070180">
    <property type="term" value="F:large ribosomal subunit rRNA binding"/>
    <property type="evidence" value="ECO:0007669"/>
    <property type="project" value="TreeGrafter"/>
</dbReference>
<dbReference type="GO" id="GO:0003735">
    <property type="term" value="F:structural constituent of ribosome"/>
    <property type="evidence" value="ECO:0007669"/>
    <property type="project" value="InterPro"/>
</dbReference>
<dbReference type="GO" id="GO:0006412">
    <property type="term" value="P:translation"/>
    <property type="evidence" value="ECO:0007669"/>
    <property type="project" value="UniProtKB-UniRule"/>
</dbReference>
<dbReference type="CDD" id="cd00337">
    <property type="entry name" value="Ribosomal_uL14"/>
    <property type="match status" value="1"/>
</dbReference>
<dbReference type="FunFam" id="2.40.150.20:FF:000001">
    <property type="entry name" value="50S ribosomal protein L14"/>
    <property type="match status" value="1"/>
</dbReference>
<dbReference type="Gene3D" id="2.40.150.20">
    <property type="entry name" value="Ribosomal protein L14"/>
    <property type="match status" value="1"/>
</dbReference>
<dbReference type="HAMAP" id="MF_01367">
    <property type="entry name" value="Ribosomal_uL14"/>
    <property type="match status" value="1"/>
</dbReference>
<dbReference type="InterPro" id="IPR000218">
    <property type="entry name" value="Ribosomal_uL14"/>
</dbReference>
<dbReference type="InterPro" id="IPR005745">
    <property type="entry name" value="Ribosomal_uL14_bac-type"/>
</dbReference>
<dbReference type="InterPro" id="IPR019972">
    <property type="entry name" value="Ribosomal_uL14_CS"/>
</dbReference>
<dbReference type="InterPro" id="IPR036853">
    <property type="entry name" value="Ribosomal_uL14_sf"/>
</dbReference>
<dbReference type="NCBIfam" id="TIGR01067">
    <property type="entry name" value="rplN_bact"/>
    <property type="match status" value="1"/>
</dbReference>
<dbReference type="PANTHER" id="PTHR11761">
    <property type="entry name" value="50S/60S RIBOSOMAL PROTEIN L14/L23"/>
    <property type="match status" value="1"/>
</dbReference>
<dbReference type="PANTHER" id="PTHR11761:SF3">
    <property type="entry name" value="LARGE RIBOSOMAL SUBUNIT PROTEIN UL14M"/>
    <property type="match status" value="1"/>
</dbReference>
<dbReference type="Pfam" id="PF00238">
    <property type="entry name" value="Ribosomal_L14"/>
    <property type="match status" value="1"/>
</dbReference>
<dbReference type="SMART" id="SM01374">
    <property type="entry name" value="Ribosomal_L14"/>
    <property type="match status" value="1"/>
</dbReference>
<dbReference type="SUPFAM" id="SSF50193">
    <property type="entry name" value="Ribosomal protein L14"/>
    <property type="match status" value="1"/>
</dbReference>
<dbReference type="PROSITE" id="PS00049">
    <property type="entry name" value="RIBOSOMAL_L14"/>
    <property type="match status" value="1"/>
</dbReference>
<gene>
    <name evidence="1" type="primary">rplN</name>
    <name evidence="1" type="synonym">rpl14</name>
    <name type="ordered locus">PM1405</name>
</gene>
<organism>
    <name type="scientific">Pasteurella multocida (strain Pm70)</name>
    <dbReference type="NCBI Taxonomy" id="272843"/>
    <lineage>
        <taxon>Bacteria</taxon>
        <taxon>Pseudomonadati</taxon>
        <taxon>Pseudomonadota</taxon>
        <taxon>Gammaproteobacteria</taxon>
        <taxon>Pasteurellales</taxon>
        <taxon>Pasteurellaceae</taxon>
        <taxon>Pasteurella</taxon>
    </lineage>
</organism>
<accession>P66068</accession>
<accession>P44352</accession>
<feature type="chain" id="PRO_0000128556" description="Large ribosomal subunit protein uL14">
    <location>
        <begin position="1"/>
        <end position="123"/>
    </location>
</feature>
<keyword id="KW-1185">Reference proteome</keyword>
<keyword id="KW-0687">Ribonucleoprotein</keyword>
<keyword id="KW-0689">Ribosomal protein</keyword>
<keyword id="KW-0694">RNA-binding</keyword>
<keyword id="KW-0699">rRNA-binding</keyword>
<sequence length="123" mass="13501">MIQEQTMLDVADNSGARSVMCIKVLGGSHRRYAAIGDIIKITVKEAIPRGKVKKGDVLKAVVVRTKKGVRRPDGSVIRFDGNACVILNNNTEQPIGTRIFGPVTRELRSEKFMKIISLAPEVL</sequence>
<comment type="function">
    <text evidence="1">Binds to 23S rRNA. Forms part of two intersubunit bridges in the 70S ribosome.</text>
</comment>
<comment type="subunit">
    <text evidence="1">Part of the 50S ribosomal subunit. Forms a cluster with proteins L3 and L19. In the 70S ribosome, L14 and L19 interact and together make contacts with the 16S rRNA in bridges B5 and B8.</text>
</comment>
<comment type="similarity">
    <text evidence="1">Belongs to the universal ribosomal protein uL14 family.</text>
</comment>
<protein>
    <recommendedName>
        <fullName evidence="1">Large ribosomal subunit protein uL14</fullName>
    </recommendedName>
    <alternativeName>
        <fullName evidence="2">50S ribosomal protein L14</fullName>
    </alternativeName>
</protein>
<proteinExistence type="inferred from homology"/>
<evidence type="ECO:0000255" key="1">
    <source>
        <dbReference type="HAMAP-Rule" id="MF_01367"/>
    </source>
</evidence>
<evidence type="ECO:0000305" key="2"/>
<name>RL14_PASMU</name>
<reference key="1">
    <citation type="journal article" date="2001" name="Proc. Natl. Acad. Sci. U.S.A.">
        <title>Complete genomic sequence of Pasteurella multocida Pm70.</title>
        <authorList>
            <person name="May B.J."/>
            <person name="Zhang Q."/>
            <person name="Li L.L."/>
            <person name="Paustian M.L."/>
            <person name="Whittam T.S."/>
            <person name="Kapur V."/>
        </authorList>
    </citation>
    <scope>NUCLEOTIDE SEQUENCE [LARGE SCALE GENOMIC DNA]</scope>
    <source>
        <strain>Pm70</strain>
    </source>
</reference>